<name>CLPX_STRM5</name>
<sequence>MSEDRQGRSTDTGKILYCSFCGKSQHEVRKLIAGPSVFICDECVELCNDIIREELEEKAQSARSSLPKPREILEVLDQYVIGQNRAKRTLAVAVYNHYKRIESRQKNDEVELAKSNILLVGPTGSGKTLLAETLARLLNVPFTMADATTLTEAGYVGEDVENIIQKLLQKCDYDVEKAQQGIVYIDEIDKISRKSENPSITRDVSGEGVQQALLKLIEGTVASVPPQGGRKHPQQEFLQVDTKNILFICGGAFAGLDKVIQARSTDVGSIGFGAKVKSAERKQEVGKVLAEVEPEDLIKFGLIPEFVGRLPVVATLEELDEPALIKILTEPKNAITKQFKKLFEMENVELEFRPDALSAIARKALKRKTGARGLRTIVESVLLDTMYDLPSQENVSKVVVDESVIEHKSEPYLIYQTPAAPEQKAAGAE</sequence>
<accession>B4SLN2</accession>
<dbReference type="EMBL" id="CP001111">
    <property type="protein sequence ID" value="ACF50542.1"/>
    <property type="molecule type" value="Genomic_DNA"/>
</dbReference>
<dbReference type="RefSeq" id="WP_004146319.1">
    <property type="nucleotide sequence ID" value="NC_011071.1"/>
</dbReference>
<dbReference type="SMR" id="B4SLN2"/>
<dbReference type="STRING" id="391008.Smal_0837"/>
<dbReference type="KEGG" id="smt:Smal_0837"/>
<dbReference type="eggNOG" id="COG1219">
    <property type="taxonomic scope" value="Bacteria"/>
</dbReference>
<dbReference type="HOGENOM" id="CLU_014218_8_2_6"/>
<dbReference type="OrthoDB" id="9804062at2"/>
<dbReference type="Proteomes" id="UP000001867">
    <property type="component" value="Chromosome"/>
</dbReference>
<dbReference type="GO" id="GO:0009376">
    <property type="term" value="C:HslUV protease complex"/>
    <property type="evidence" value="ECO:0007669"/>
    <property type="project" value="TreeGrafter"/>
</dbReference>
<dbReference type="GO" id="GO:0005524">
    <property type="term" value="F:ATP binding"/>
    <property type="evidence" value="ECO:0007669"/>
    <property type="project" value="UniProtKB-UniRule"/>
</dbReference>
<dbReference type="GO" id="GO:0016887">
    <property type="term" value="F:ATP hydrolysis activity"/>
    <property type="evidence" value="ECO:0007669"/>
    <property type="project" value="InterPro"/>
</dbReference>
<dbReference type="GO" id="GO:0140662">
    <property type="term" value="F:ATP-dependent protein folding chaperone"/>
    <property type="evidence" value="ECO:0007669"/>
    <property type="project" value="InterPro"/>
</dbReference>
<dbReference type="GO" id="GO:0046983">
    <property type="term" value="F:protein dimerization activity"/>
    <property type="evidence" value="ECO:0007669"/>
    <property type="project" value="InterPro"/>
</dbReference>
<dbReference type="GO" id="GO:0051082">
    <property type="term" value="F:unfolded protein binding"/>
    <property type="evidence" value="ECO:0007669"/>
    <property type="project" value="UniProtKB-UniRule"/>
</dbReference>
<dbReference type="GO" id="GO:0008270">
    <property type="term" value="F:zinc ion binding"/>
    <property type="evidence" value="ECO:0007669"/>
    <property type="project" value="InterPro"/>
</dbReference>
<dbReference type="GO" id="GO:0051301">
    <property type="term" value="P:cell division"/>
    <property type="evidence" value="ECO:0007669"/>
    <property type="project" value="TreeGrafter"/>
</dbReference>
<dbReference type="GO" id="GO:0051603">
    <property type="term" value="P:proteolysis involved in protein catabolic process"/>
    <property type="evidence" value="ECO:0007669"/>
    <property type="project" value="TreeGrafter"/>
</dbReference>
<dbReference type="CDD" id="cd19497">
    <property type="entry name" value="RecA-like_ClpX"/>
    <property type="match status" value="1"/>
</dbReference>
<dbReference type="FunFam" id="1.10.8.60:FF:000002">
    <property type="entry name" value="ATP-dependent Clp protease ATP-binding subunit ClpX"/>
    <property type="match status" value="1"/>
</dbReference>
<dbReference type="FunFam" id="3.40.50.300:FF:000005">
    <property type="entry name" value="ATP-dependent Clp protease ATP-binding subunit ClpX"/>
    <property type="match status" value="1"/>
</dbReference>
<dbReference type="Gene3D" id="1.10.8.60">
    <property type="match status" value="1"/>
</dbReference>
<dbReference type="Gene3D" id="6.20.220.10">
    <property type="entry name" value="ClpX chaperone, C4-type zinc finger domain"/>
    <property type="match status" value="1"/>
</dbReference>
<dbReference type="Gene3D" id="3.40.50.300">
    <property type="entry name" value="P-loop containing nucleotide triphosphate hydrolases"/>
    <property type="match status" value="1"/>
</dbReference>
<dbReference type="HAMAP" id="MF_00175">
    <property type="entry name" value="ClpX"/>
    <property type="match status" value="1"/>
</dbReference>
<dbReference type="InterPro" id="IPR003593">
    <property type="entry name" value="AAA+_ATPase"/>
</dbReference>
<dbReference type="InterPro" id="IPR050052">
    <property type="entry name" value="ATP-dep_Clp_protease_ClpX"/>
</dbReference>
<dbReference type="InterPro" id="IPR003959">
    <property type="entry name" value="ATPase_AAA_core"/>
</dbReference>
<dbReference type="InterPro" id="IPR019489">
    <property type="entry name" value="Clp_ATPase_C"/>
</dbReference>
<dbReference type="InterPro" id="IPR004487">
    <property type="entry name" value="Clp_protease_ATP-bd_su_ClpX"/>
</dbReference>
<dbReference type="InterPro" id="IPR046425">
    <property type="entry name" value="ClpX_bact"/>
</dbReference>
<dbReference type="InterPro" id="IPR027417">
    <property type="entry name" value="P-loop_NTPase"/>
</dbReference>
<dbReference type="InterPro" id="IPR010603">
    <property type="entry name" value="Znf_CppX_C4"/>
</dbReference>
<dbReference type="InterPro" id="IPR038366">
    <property type="entry name" value="Znf_CppX_C4_sf"/>
</dbReference>
<dbReference type="NCBIfam" id="TIGR00382">
    <property type="entry name" value="clpX"/>
    <property type="match status" value="1"/>
</dbReference>
<dbReference type="NCBIfam" id="NF003745">
    <property type="entry name" value="PRK05342.1"/>
    <property type="match status" value="1"/>
</dbReference>
<dbReference type="PANTHER" id="PTHR48102:SF7">
    <property type="entry name" value="ATP-DEPENDENT CLP PROTEASE ATP-BINDING SUBUNIT CLPX-LIKE, MITOCHONDRIAL"/>
    <property type="match status" value="1"/>
</dbReference>
<dbReference type="PANTHER" id="PTHR48102">
    <property type="entry name" value="ATP-DEPENDENT CLP PROTEASE ATP-BINDING SUBUNIT CLPX-LIKE, MITOCHONDRIAL-RELATED"/>
    <property type="match status" value="1"/>
</dbReference>
<dbReference type="Pfam" id="PF07724">
    <property type="entry name" value="AAA_2"/>
    <property type="match status" value="1"/>
</dbReference>
<dbReference type="Pfam" id="PF10431">
    <property type="entry name" value="ClpB_D2-small"/>
    <property type="match status" value="1"/>
</dbReference>
<dbReference type="Pfam" id="PF06689">
    <property type="entry name" value="zf-C4_ClpX"/>
    <property type="match status" value="1"/>
</dbReference>
<dbReference type="SMART" id="SM00382">
    <property type="entry name" value="AAA"/>
    <property type="match status" value="1"/>
</dbReference>
<dbReference type="SMART" id="SM01086">
    <property type="entry name" value="ClpB_D2-small"/>
    <property type="match status" value="1"/>
</dbReference>
<dbReference type="SMART" id="SM00994">
    <property type="entry name" value="zf-C4_ClpX"/>
    <property type="match status" value="1"/>
</dbReference>
<dbReference type="SUPFAM" id="SSF57716">
    <property type="entry name" value="Glucocorticoid receptor-like (DNA-binding domain)"/>
    <property type="match status" value="1"/>
</dbReference>
<dbReference type="SUPFAM" id="SSF52540">
    <property type="entry name" value="P-loop containing nucleoside triphosphate hydrolases"/>
    <property type="match status" value="1"/>
</dbReference>
<dbReference type="PROSITE" id="PS51902">
    <property type="entry name" value="CLPX_ZB"/>
    <property type="match status" value="1"/>
</dbReference>
<gene>
    <name evidence="1" type="primary">clpX</name>
    <name type="ordered locus">Smal_0837</name>
</gene>
<protein>
    <recommendedName>
        <fullName evidence="1">ATP-dependent Clp protease ATP-binding subunit ClpX</fullName>
    </recommendedName>
</protein>
<proteinExistence type="inferred from homology"/>
<feature type="chain" id="PRO_1000098005" description="ATP-dependent Clp protease ATP-binding subunit ClpX">
    <location>
        <begin position="1"/>
        <end position="429"/>
    </location>
</feature>
<feature type="domain" description="ClpX-type ZB" evidence="2">
    <location>
        <begin position="6"/>
        <end position="59"/>
    </location>
</feature>
<feature type="binding site" evidence="2">
    <location>
        <position position="18"/>
    </location>
    <ligand>
        <name>Zn(2+)</name>
        <dbReference type="ChEBI" id="CHEBI:29105"/>
    </ligand>
</feature>
<feature type="binding site" evidence="2">
    <location>
        <position position="21"/>
    </location>
    <ligand>
        <name>Zn(2+)</name>
        <dbReference type="ChEBI" id="CHEBI:29105"/>
    </ligand>
</feature>
<feature type="binding site" evidence="2">
    <location>
        <position position="40"/>
    </location>
    <ligand>
        <name>Zn(2+)</name>
        <dbReference type="ChEBI" id="CHEBI:29105"/>
    </ligand>
</feature>
<feature type="binding site" evidence="2">
    <location>
        <position position="43"/>
    </location>
    <ligand>
        <name>Zn(2+)</name>
        <dbReference type="ChEBI" id="CHEBI:29105"/>
    </ligand>
</feature>
<feature type="binding site" evidence="1">
    <location>
        <begin position="122"/>
        <end position="129"/>
    </location>
    <ligand>
        <name>ATP</name>
        <dbReference type="ChEBI" id="CHEBI:30616"/>
    </ligand>
</feature>
<organism>
    <name type="scientific">Stenotrophomonas maltophilia (strain R551-3)</name>
    <dbReference type="NCBI Taxonomy" id="391008"/>
    <lineage>
        <taxon>Bacteria</taxon>
        <taxon>Pseudomonadati</taxon>
        <taxon>Pseudomonadota</taxon>
        <taxon>Gammaproteobacteria</taxon>
        <taxon>Lysobacterales</taxon>
        <taxon>Lysobacteraceae</taxon>
        <taxon>Stenotrophomonas</taxon>
        <taxon>Stenotrophomonas maltophilia group</taxon>
    </lineage>
</organism>
<reference key="1">
    <citation type="submission" date="2008-06" db="EMBL/GenBank/DDBJ databases">
        <title>Complete sequence of Stenotrophomonas maltophilia R551-3.</title>
        <authorList>
            <consortium name="US DOE Joint Genome Institute"/>
            <person name="Lucas S."/>
            <person name="Copeland A."/>
            <person name="Lapidus A."/>
            <person name="Glavina del Rio T."/>
            <person name="Dalin E."/>
            <person name="Tice H."/>
            <person name="Pitluck S."/>
            <person name="Chain P."/>
            <person name="Malfatti S."/>
            <person name="Shin M."/>
            <person name="Vergez L."/>
            <person name="Lang D."/>
            <person name="Schmutz J."/>
            <person name="Larimer F."/>
            <person name="Land M."/>
            <person name="Hauser L."/>
            <person name="Kyrpides N."/>
            <person name="Mikhailova N."/>
            <person name="Taghavi S."/>
            <person name="Monchy S."/>
            <person name="Newman L."/>
            <person name="Vangronsveld J."/>
            <person name="van der Lelie D."/>
            <person name="Richardson P."/>
        </authorList>
    </citation>
    <scope>NUCLEOTIDE SEQUENCE [LARGE SCALE GENOMIC DNA]</scope>
    <source>
        <strain>R551-3</strain>
    </source>
</reference>
<keyword id="KW-0067">ATP-binding</keyword>
<keyword id="KW-0143">Chaperone</keyword>
<keyword id="KW-0479">Metal-binding</keyword>
<keyword id="KW-0547">Nucleotide-binding</keyword>
<keyword id="KW-0862">Zinc</keyword>
<evidence type="ECO:0000255" key="1">
    <source>
        <dbReference type="HAMAP-Rule" id="MF_00175"/>
    </source>
</evidence>
<evidence type="ECO:0000255" key="2">
    <source>
        <dbReference type="PROSITE-ProRule" id="PRU01250"/>
    </source>
</evidence>
<comment type="function">
    <text evidence="1">ATP-dependent specificity component of the Clp protease. It directs the protease to specific substrates. Can perform chaperone functions in the absence of ClpP.</text>
</comment>
<comment type="subunit">
    <text evidence="1">Component of the ClpX-ClpP complex. Forms a hexameric ring that, in the presence of ATP, binds to fourteen ClpP subunits assembled into a disk-like structure with a central cavity, resembling the structure of eukaryotic proteasomes.</text>
</comment>
<comment type="similarity">
    <text evidence="1">Belongs to the ClpX chaperone family.</text>
</comment>